<gene>
    <name evidence="1" type="primary">nbaC</name>
    <name type="ordered locus">SPO1774</name>
</gene>
<reference key="1">
    <citation type="journal article" date="2004" name="Nature">
        <title>Genome sequence of Silicibacter pomeroyi reveals adaptations to the marine environment.</title>
        <authorList>
            <person name="Moran M.A."/>
            <person name="Buchan A."/>
            <person name="Gonzalez J.M."/>
            <person name="Heidelberg J.F."/>
            <person name="Whitman W.B."/>
            <person name="Kiene R.P."/>
            <person name="Henriksen J.R."/>
            <person name="King G.M."/>
            <person name="Belas R."/>
            <person name="Fuqua C."/>
            <person name="Brinkac L.M."/>
            <person name="Lewis M."/>
            <person name="Johri S."/>
            <person name="Weaver B."/>
            <person name="Pai G."/>
            <person name="Eisen J.A."/>
            <person name="Rahe E."/>
            <person name="Sheldon W.M."/>
            <person name="Ye W."/>
            <person name="Miller T.R."/>
            <person name="Carlton J."/>
            <person name="Rasko D.A."/>
            <person name="Paulsen I.T."/>
            <person name="Ren Q."/>
            <person name="Daugherty S.C."/>
            <person name="DeBoy R.T."/>
            <person name="Dodson R.J."/>
            <person name="Durkin A.S."/>
            <person name="Madupu R."/>
            <person name="Nelson W.C."/>
            <person name="Sullivan S.A."/>
            <person name="Rosovitz M.J."/>
            <person name="Haft D.H."/>
            <person name="Selengut J."/>
            <person name="Ward N."/>
        </authorList>
    </citation>
    <scope>NUCLEOTIDE SEQUENCE [LARGE SCALE GENOMIC DNA]</scope>
    <source>
        <strain>ATCC 700808 / DSM 15171 / DSS-3</strain>
    </source>
</reference>
<reference key="2">
    <citation type="journal article" date="2014" name="Stand. Genomic Sci.">
        <title>An updated genome annotation for the model marine bacterium Ruegeria pomeroyi DSS-3.</title>
        <authorList>
            <person name="Rivers A.R."/>
            <person name="Smith C.B."/>
            <person name="Moran M.A."/>
        </authorList>
    </citation>
    <scope>GENOME REANNOTATION</scope>
    <source>
        <strain>ATCC 700808 / DSM 15171 / DSS-3</strain>
    </source>
</reference>
<comment type="function">
    <text evidence="1">Catalyzes the oxidative ring opening of 3-hydroxyanthranilate to 2-amino-3-carboxymuconate semialdehyde, which spontaneously cyclizes to quinolinate.</text>
</comment>
<comment type="catalytic activity">
    <reaction evidence="1">
        <text>3-hydroxyanthranilate + O2 = (2Z,4Z)-2-amino-3-carboxymuconate 6-semialdehyde</text>
        <dbReference type="Rhea" id="RHEA:17953"/>
        <dbReference type="ChEBI" id="CHEBI:15379"/>
        <dbReference type="ChEBI" id="CHEBI:36559"/>
        <dbReference type="ChEBI" id="CHEBI:77612"/>
        <dbReference type="EC" id="1.13.11.6"/>
    </reaction>
</comment>
<comment type="cofactor">
    <cofactor evidence="1">
        <name>Fe(2+)</name>
        <dbReference type="ChEBI" id="CHEBI:29033"/>
    </cofactor>
    <text evidence="1">Binds 2 Fe(2+) ions per subunit.</text>
</comment>
<comment type="pathway">
    <text evidence="1">Cofactor biosynthesis; NAD(+) biosynthesis; quinolinate from L-kynurenine: step 3/3.</text>
</comment>
<comment type="subunit">
    <text evidence="1">Homodimer.</text>
</comment>
<comment type="similarity">
    <text evidence="1">Belongs to the 3-HAO family.</text>
</comment>
<name>3HAO_RUEPO</name>
<proteinExistence type="inferred from homology"/>
<protein>
    <recommendedName>
        <fullName evidence="1">3-hydroxyanthranilate 3,4-dioxygenase</fullName>
        <ecNumber evidence="1">1.13.11.6</ecNumber>
    </recommendedName>
    <alternativeName>
        <fullName evidence="1">3-hydroxyanthranilate oxygenase</fullName>
        <shortName evidence="1">3-HAO</shortName>
    </alternativeName>
    <alternativeName>
        <fullName evidence="1">3-hydroxyanthranilic acid dioxygenase</fullName>
        <shortName evidence="1">HAD</shortName>
    </alternativeName>
</protein>
<accession>Q5LSJ4</accession>
<evidence type="ECO:0000255" key="1">
    <source>
        <dbReference type="HAMAP-Rule" id="MF_00825"/>
    </source>
</evidence>
<feature type="chain" id="PRO_0000245478" description="3-hydroxyanthranilate 3,4-dioxygenase">
    <location>
        <begin position="1"/>
        <end position="180"/>
    </location>
</feature>
<feature type="binding site" evidence="1">
    <location>
        <position position="46"/>
    </location>
    <ligand>
        <name>O2</name>
        <dbReference type="ChEBI" id="CHEBI:15379"/>
    </ligand>
</feature>
<feature type="binding site" evidence="1">
    <location>
        <position position="50"/>
    </location>
    <ligand>
        <name>Fe cation</name>
        <dbReference type="ChEBI" id="CHEBI:24875"/>
        <label>1</label>
        <note>catalytic</note>
    </ligand>
</feature>
<feature type="binding site" evidence="1">
    <location>
        <position position="56"/>
    </location>
    <ligand>
        <name>Fe cation</name>
        <dbReference type="ChEBI" id="CHEBI:24875"/>
        <label>1</label>
        <note>catalytic</note>
    </ligand>
</feature>
<feature type="binding site" evidence="1">
    <location>
        <position position="56"/>
    </location>
    <ligand>
        <name>substrate</name>
    </ligand>
</feature>
<feature type="binding site" evidence="1">
    <location>
        <position position="94"/>
    </location>
    <ligand>
        <name>Fe cation</name>
        <dbReference type="ChEBI" id="CHEBI:24875"/>
        <label>1</label>
        <note>catalytic</note>
    </ligand>
</feature>
<feature type="binding site" evidence="1">
    <location>
        <position position="98"/>
    </location>
    <ligand>
        <name>substrate</name>
    </ligand>
</feature>
<feature type="binding site" evidence="1">
    <location>
        <position position="109"/>
    </location>
    <ligand>
        <name>substrate</name>
    </ligand>
</feature>
<feature type="binding site" evidence="1">
    <location>
        <position position="124"/>
    </location>
    <ligand>
        <name>Fe cation</name>
        <dbReference type="ChEBI" id="CHEBI:24875"/>
        <label>2</label>
    </ligand>
</feature>
<feature type="binding site" evidence="1">
    <location>
        <position position="127"/>
    </location>
    <ligand>
        <name>Fe cation</name>
        <dbReference type="ChEBI" id="CHEBI:24875"/>
        <label>2</label>
    </ligand>
</feature>
<feature type="binding site" evidence="1">
    <location>
        <position position="161"/>
    </location>
    <ligand>
        <name>Fe cation</name>
        <dbReference type="ChEBI" id="CHEBI:24875"/>
        <label>2</label>
    </ligand>
</feature>
<feature type="binding site" evidence="1">
    <location>
        <position position="164"/>
    </location>
    <ligand>
        <name>Fe cation</name>
        <dbReference type="ChEBI" id="CHEBI:24875"/>
        <label>2</label>
    </ligand>
</feature>
<sequence length="180" mass="20575">MARLSAFNFQKWIDEHKHLLKPPVGNQQVWEDADLMVTVVGGPNKRTDYHDDPVEEFFYQLKGDMVLKLYEGGEFYDVPIREGDIFLLPPHVRHSPQRPQEGSIGLVIEPKRPEGAHDAIEWFCFGCGSLVHRAELLLESIVRDLPPVYQAFYADEQARTCPNCGEIHPGKEPPEGWVKL</sequence>
<organism>
    <name type="scientific">Ruegeria pomeroyi (strain ATCC 700808 / DSM 15171 / DSS-3)</name>
    <name type="common">Silicibacter pomeroyi</name>
    <dbReference type="NCBI Taxonomy" id="246200"/>
    <lineage>
        <taxon>Bacteria</taxon>
        <taxon>Pseudomonadati</taxon>
        <taxon>Pseudomonadota</taxon>
        <taxon>Alphaproteobacteria</taxon>
        <taxon>Rhodobacterales</taxon>
        <taxon>Roseobacteraceae</taxon>
        <taxon>Ruegeria</taxon>
    </lineage>
</organism>
<keyword id="KW-0223">Dioxygenase</keyword>
<keyword id="KW-0408">Iron</keyword>
<keyword id="KW-0479">Metal-binding</keyword>
<keyword id="KW-0560">Oxidoreductase</keyword>
<keyword id="KW-0662">Pyridine nucleotide biosynthesis</keyword>
<keyword id="KW-1185">Reference proteome</keyword>
<dbReference type="EC" id="1.13.11.6" evidence="1"/>
<dbReference type="EMBL" id="CP000031">
    <property type="protein sequence ID" value="AAV95053.1"/>
    <property type="molecule type" value="Genomic_DNA"/>
</dbReference>
<dbReference type="RefSeq" id="WP_011047507.1">
    <property type="nucleotide sequence ID" value="NC_003911.12"/>
</dbReference>
<dbReference type="SMR" id="Q5LSJ4"/>
<dbReference type="STRING" id="246200.SPO1774"/>
<dbReference type="PaxDb" id="246200-SPO1774"/>
<dbReference type="KEGG" id="sil:SPO1774"/>
<dbReference type="eggNOG" id="COG1917">
    <property type="taxonomic scope" value="Bacteria"/>
</dbReference>
<dbReference type="HOGENOM" id="CLU_095765_0_0_5"/>
<dbReference type="OrthoDB" id="5002379at2"/>
<dbReference type="UniPathway" id="UPA00253">
    <property type="reaction ID" value="UER00330"/>
</dbReference>
<dbReference type="Proteomes" id="UP000001023">
    <property type="component" value="Chromosome"/>
</dbReference>
<dbReference type="GO" id="GO:0000334">
    <property type="term" value="F:3-hydroxyanthranilate 3,4-dioxygenase activity"/>
    <property type="evidence" value="ECO:0007669"/>
    <property type="project" value="UniProtKB-UniRule"/>
</dbReference>
<dbReference type="GO" id="GO:0008198">
    <property type="term" value="F:ferrous iron binding"/>
    <property type="evidence" value="ECO:0007669"/>
    <property type="project" value="UniProtKB-UniRule"/>
</dbReference>
<dbReference type="GO" id="GO:0043420">
    <property type="term" value="P:anthranilate metabolic process"/>
    <property type="evidence" value="ECO:0007669"/>
    <property type="project" value="UniProtKB-UniRule"/>
</dbReference>
<dbReference type="GO" id="GO:0006569">
    <property type="term" value="P:L-tryptophan catabolic process"/>
    <property type="evidence" value="ECO:0007669"/>
    <property type="project" value="UniProtKB-UniRule"/>
</dbReference>
<dbReference type="GO" id="GO:0009435">
    <property type="term" value="P:NAD biosynthetic process"/>
    <property type="evidence" value="ECO:0007669"/>
    <property type="project" value="UniProtKB-UniPathway"/>
</dbReference>
<dbReference type="GO" id="GO:0019805">
    <property type="term" value="P:quinolinate biosynthetic process"/>
    <property type="evidence" value="ECO:0007669"/>
    <property type="project" value="UniProtKB-UniRule"/>
</dbReference>
<dbReference type="CDD" id="cd06123">
    <property type="entry name" value="cupin_HAO"/>
    <property type="match status" value="1"/>
</dbReference>
<dbReference type="Gene3D" id="2.60.120.10">
    <property type="entry name" value="Jelly Rolls"/>
    <property type="match status" value="1"/>
</dbReference>
<dbReference type="HAMAP" id="MF_00825">
    <property type="entry name" value="3_HAO"/>
    <property type="match status" value="1"/>
</dbReference>
<dbReference type="InterPro" id="IPR010329">
    <property type="entry name" value="3hydroanth_dOase"/>
</dbReference>
<dbReference type="InterPro" id="IPR014710">
    <property type="entry name" value="RmlC-like_jellyroll"/>
</dbReference>
<dbReference type="InterPro" id="IPR011051">
    <property type="entry name" value="RmlC_Cupin_sf"/>
</dbReference>
<dbReference type="NCBIfam" id="TIGR03037">
    <property type="entry name" value="anthran_nbaC"/>
    <property type="match status" value="1"/>
</dbReference>
<dbReference type="NCBIfam" id="NF009763">
    <property type="entry name" value="PRK13264.1"/>
    <property type="match status" value="1"/>
</dbReference>
<dbReference type="PANTHER" id="PTHR15497">
    <property type="entry name" value="3-HYDROXYANTHRANILATE 3,4-DIOXYGENASE"/>
    <property type="match status" value="1"/>
</dbReference>
<dbReference type="PANTHER" id="PTHR15497:SF1">
    <property type="entry name" value="3-HYDROXYANTHRANILATE 3,4-DIOXYGENASE"/>
    <property type="match status" value="1"/>
</dbReference>
<dbReference type="Pfam" id="PF06052">
    <property type="entry name" value="3-HAO"/>
    <property type="match status" value="1"/>
</dbReference>
<dbReference type="SUPFAM" id="SSF51182">
    <property type="entry name" value="RmlC-like cupins"/>
    <property type="match status" value="1"/>
</dbReference>